<protein>
    <recommendedName>
        <fullName evidence="1">3,4-dihydroxy-2-butanone 4-phosphate synthase</fullName>
        <shortName evidence="1">DHBP synthase</shortName>
        <ecNumber evidence="1">4.1.99.12</ecNumber>
    </recommendedName>
</protein>
<organism>
    <name type="scientific">Nitratidesulfovibrio vulgaris (strain ATCC 29579 / DSM 644 / CCUG 34227 / NCIMB 8303 / VKM B-1760 / Hildenborough)</name>
    <name type="common">Desulfovibrio vulgaris</name>
    <dbReference type="NCBI Taxonomy" id="882"/>
    <lineage>
        <taxon>Bacteria</taxon>
        <taxon>Pseudomonadati</taxon>
        <taxon>Thermodesulfobacteriota</taxon>
        <taxon>Desulfovibrionia</taxon>
        <taxon>Desulfovibrionales</taxon>
        <taxon>Desulfovibrionaceae</taxon>
        <taxon>Nitratidesulfovibrio</taxon>
    </lineage>
</organism>
<comment type="function">
    <text evidence="1">Catalyzes the conversion of D-ribulose 5-phosphate to formate and 3,4-dihydroxy-2-butanone 4-phosphate.</text>
</comment>
<comment type="catalytic activity">
    <reaction evidence="1">
        <text>D-ribulose 5-phosphate = (2S)-2-hydroxy-3-oxobutyl phosphate + formate + H(+)</text>
        <dbReference type="Rhea" id="RHEA:18457"/>
        <dbReference type="ChEBI" id="CHEBI:15378"/>
        <dbReference type="ChEBI" id="CHEBI:15740"/>
        <dbReference type="ChEBI" id="CHEBI:58121"/>
        <dbReference type="ChEBI" id="CHEBI:58830"/>
        <dbReference type="EC" id="4.1.99.12"/>
    </reaction>
</comment>
<comment type="cofactor">
    <cofactor evidence="1">
        <name>Mg(2+)</name>
        <dbReference type="ChEBI" id="CHEBI:18420"/>
    </cofactor>
    <cofactor evidence="1">
        <name>Mn(2+)</name>
        <dbReference type="ChEBI" id="CHEBI:29035"/>
    </cofactor>
    <text evidence="1">Binds 2 divalent metal cations per subunit. Magnesium or manganese.</text>
</comment>
<comment type="pathway">
    <text evidence="1">Cofactor biosynthesis; riboflavin biosynthesis; 2-hydroxy-3-oxobutyl phosphate from D-ribulose 5-phosphate: step 1/1.</text>
</comment>
<comment type="subunit">
    <text evidence="1">Homodimer.</text>
</comment>
<comment type="similarity">
    <text evidence="1">Belongs to the DHBP synthase family.</text>
</comment>
<accession>Q72B63</accession>
<gene>
    <name evidence="1" type="primary">ribB</name>
    <name type="ordered locus">DVU_1775</name>
</gene>
<reference key="1">
    <citation type="journal article" date="2004" name="Nat. Biotechnol.">
        <title>The genome sequence of the anaerobic, sulfate-reducing bacterium Desulfovibrio vulgaris Hildenborough.</title>
        <authorList>
            <person name="Heidelberg J.F."/>
            <person name="Seshadri R."/>
            <person name="Haveman S.A."/>
            <person name="Hemme C.L."/>
            <person name="Paulsen I.T."/>
            <person name="Kolonay J.F."/>
            <person name="Eisen J.A."/>
            <person name="Ward N.L."/>
            <person name="Methe B.A."/>
            <person name="Brinkac L.M."/>
            <person name="Daugherty S.C."/>
            <person name="DeBoy R.T."/>
            <person name="Dodson R.J."/>
            <person name="Durkin A.S."/>
            <person name="Madupu R."/>
            <person name="Nelson W.C."/>
            <person name="Sullivan S.A."/>
            <person name="Fouts D.E."/>
            <person name="Haft D.H."/>
            <person name="Selengut J."/>
            <person name="Peterson J.D."/>
            <person name="Davidsen T.M."/>
            <person name="Zafar N."/>
            <person name="Zhou L."/>
            <person name="Radune D."/>
            <person name="Dimitrov G."/>
            <person name="Hance M."/>
            <person name="Tran K."/>
            <person name="Khouri H.M."/>
            <person name="Gill J."/>
            <person name="Utterback T.R."/>
            <person name="Feldblyum T.V."/>
            <person name="Wall J.D."/>
            <person name="Voordouw G."/>
            <person name="Fraser C.M."/>
        </authorList>
    </citation>
    <scope>NUCLEOTIDE SEQUENCE [LARGE SCALE GENOMIC DNA]</scope>
    <source>
        <strain>ATCC 29579 / DSM 644 / CCUG 34227 / NCIMB 8303 / VKM B-1760 / Hildenborough</strain>
    </source>
</reference>
<proteinExistence type="inferred from homology"/>
<sequence>MNQHLLEQFGTTHERVERGLAALRTGQGVLVADDADRENEGDLIFAAETLTPAQMAMMIRECSGIVCLCLPEERVSRLGLPMMVAHNTSSMGTAFTISIEAAEGVTTGVSAADRVRTVKAAIDDAACPGCLRSPGHVFPLRASPGGVLERRGHTEATVDLMRLAGLKPYGVLCELTNPDGTMARLPQLVDFAQRNRMTVLTVEDLVAYRQDKGL</sequence>
<name>RIBB_NITV2</name>
<keyword id="KW-0456">Lyase</keyword>
<keyword id="KW-0460">Magnesium</keyword>
<keyword id="KW-0464">Manganese</keyword>
<keyword id="KW-0479">Metal-binding</keyword>
<keyword id="KW-1185">Reference proteome</keyword>
<keyword id="KW-0686">Riboflavin biosynthesis</keyword>
<feature type="chain" id="PRO_1000040603" description="3,4-dihydroxy-2-butanone 4-phosphate synthase">
    <location>
        <begin position="1"/>
        <end position="214"/>
    </location>
</feature>
<feature type="binding site" evidence="1">
    <location>
        <begin position="37"/>
        <end position="38"/>
    </location>
    <ligand>
        <name>D-ribulose 5-phosphate</name>
        <dbReference type="ChEBI" id="CHEBI:58121"/>
    </ligand>
</feature>
<feature type="binding site" evidence="1">
    <location>
        <position position="38"/>
    </location>
    <ligand>
        <name>Mg(2+)</name>
        <dbReference type="ChEBI" id="CHEBI:18420"/>
        <label>1</label>
    </ligand>
</feature>
<feature type="binding site" evidence="1">
    <location>
        <position position="38"/>
    </location>
    <ligand>
        <name>Mg(2+)</name>
        <dbReference type="ChEBI" id="CHEBI:18420"/>
        <label>2</label>
    </ligand>
</feature>
<feature type="binding site" evidence="1">
    <location>
        <position position="42"/>
    </location>
    <ligand>
        <name>D-ribulose 5-phosphate</name>
        <dbReference type="ChEBI" id="CHEBI:58121"/>
    </ligand>
</feature>
<feature type="binding site" evidence="1">
    <location>
        <begin position="150"/>
        <end position="154"/>
    </location>
    <ligand>
        <name>D-ribulose 5-phosphate</name>
        <dbReference type="ChEBI" id="CHEBI:58121"/>
    </ligand>
</feature>
<feature type="binding site" evidence="1">
    <location>
        <position position="153"/>
    </location>
    <ligand>
        <name>Mg(2+)</name>
        <dbReference type="ChEBI" id="CHEBI:18420"/>
        <label>2</label>
    </ligand>
</feature>
<feature type="binding site" evidence="1">
    <location>
        <position position="174"/>
    </location>
    <ligand>
        <name>D-ribulose 5-phosphate</name>
        <dbReference type="ChEBI" id="CHEBI:58121"/>
    </ligand>
</feature>
<feature type="site" description="Essential for catalytic activity" evidence="1">
    <location>
        <position position="136"/>
    </location>
</feature>
<feature type="site" description="Essential for catalytic activity" evidence="1">
    <location>
        <position position="174"/>
    </location>
</feature>
<dbReference type="EC" id="4.1.99.12" evidence="1"/>
<dbReference type="EMBL" id="AE017285">
    <property type="protein sequence ID" value="AAS96252.1"/>
    <property type="molecule type" value="Genomic_DNA"/>
</dbReference>
<dbReference type="RefSeq" id="WP_010939063.1">
    <property type="nucleotide sequence ID" value="NC_002937.3"/>
</dbReference>
<dbReference type="RefSeq" id="YP_010993.1">
    <property type="nucleotide sequence ID" value="NC_002937.3"/>
</dbReference>
<dbReference type="SMR" id="Q72B63"/>
<dbReference type="STRING" id="882.DVU_1775"/>
<dbReference type="PaxDb" id="882-DVU_1775"/>
<dbReference type="EnsemblBacteria" id="AAS96252">
    <property type="protein sequence ID" value="AAS96252"/>
    <property type="gene ID" value="DVU_1775"/>
</dbReference>
<dbReference type="KEGG" id="dvu:DVU_1775"/>
<dbReference type="PATRIC" id="fig|882.5.peg.1630"/>
<dbReference type="eggNOG" id="COG0108">
    <property type="taxonomic scope" value="Bacteria"/>
</dbReference>
<dbReference type="HOGENOM" id="CLU_020273_3_0_7"/>
<dbReference type="OrthoDB" id="9793111at2"/>
<dbReference type="PhylomeDB" id="Q72B63"/>
<dbReference type="UniPathway" id="UPA00275">
    <property type="reaction ID" value="UER00399"/>
</dbReference>
<dbReference type="Proteomes" id="UP000002194">
    <property type="component" value="Chromosome"/>
</dbReference>
<dbReference type="GO" id="GO:0005829">
    <property type="term" value="C:cytosol"/>
    <property type="evidence" value="ECO:0007669"/>
    <property type="project" value="TreeGrafter"/>
</dbReference>
<dbReference type="GO" id="GO:0008686">
    <property type="term" value="F:3,4-dihydroxy-2-butanone-4-phosphate synthase activity"/>
    <property type="evidence" value="ECO:0007669"/>
    <property type="project" value="UniProtKB-UniRule"/>
</dbReference>
<dbReference type="GO" id="GO:0000287">
    <property type="term" value="F:magnesium ion binding"/>
    <property type="evidence" value="ECO:0007669"/>
    <property type="project" value="UniProtKB-UniRule"/>
</dbReference>
<dbReference type="GO" id="GO:0030145">
    <property type="term" value="F:manganese ion binding"/>
    <property type="evidence" value="ECO:0007669"/>
    <property type="project" value="UniProtKB-UniRule"/>
</dbReference>
<dbReference type="GO" id="GO:0009231">
    <property type="term" value="P:riboflavin biosynthetic process"/>
    <property type="evidence" value="ECO:0007669"/>
    <property type="project" value="UniProtKB-UniRule"/>
</dbReference>
<dbReference type="FunFam" id="3.90.870.10:FF:000002">
    <property type="entry name" value="3,4-dihydroxy-2-butanone 4-phosphate synthase"/>
    <property type="match status" value="1"/>
</dbReference>
<dbReference type="Gene3D" id="3.90.870.10">
    <property type="entry name" value="DHBP synthase"/>
    <property type="match status" value="1"/>
</dbReference>
<dbReference type="HAMAP" id="MF_00180">
    <property type="entry name" value="RibB"/>
    <property type="match status" value="1"/>
</dbReference>
<dbReference type="InterPro" id="IPR017945">
    <property type="entry name" value="DHBP_synth_RibB-like_a/b_dom"/>
</dbReference>
<dbReference type="InterPro" id="IPR000422">
    <property type="entry name" value="DHBP_synthase_RibB"/>
</dbReference>
<dbReference type="NCBIfam" id="TIGR00506">
    <property type="entry name" value="ribB"/>
    <property type="match status" value="1"/>
</dbReference>
<dbReference type="PANTHER" id="PTHR21327:SF38">
    <property type="entry name" value="3,4-DIHYDROXY-2-BUTANONE 4-PHOSPHATE SYNTHASE"/>
    <property type="match status" value="1"/>
</dbReference>
<dbReference type="PANTHER" id="PTHR21327">
    <property type="entry name" value="GTP CYCLOHYDROLASE II-RELATED"/>
    <property type="match status" value="1"/>
</dbReference>
<dbReference type="Pfam" id="PF00926">
    <property type="entry name" value="DHBP_synthase"/>
    <property type="match status" value="1"/>
</dbReference>
<dbReference type="SUPFAM" id="SSF55821">
    <property type="entry name" value="YrdC/RibB"/>
    <property type="match status" value="1"/>
</dbReference>
<evidence type="ECO:0000255" key="1">
    <source>
        <dbReference type="HAMAP-Rule" id="MF_00180"/>
    </source>
</evidence>